<keyword id="KW-0025">Alternative splicing</keyword>
<keyword id="KW-0040">ANK repeat</keyword>
<keyword id="KW-0966">Cell projection</keyword>
<keyword id="KW-0479">Metal-binding</keyword>
<keyword id="KW-1185">Reference proteome</keyword>
<keyword id="KW-0677">Repeat</keyword>
<keyword id="KW-0862">Zinc</keyword>
<keyword id="KW-0863">Zinc-finger</keyword>
<reference key="1">
    <citation type="journal article" date="2004" name="Nature">
        <title>Genome sequence of the Brown Norway rat yields insights into mammalian evolution.</title>
        <authorList>
            <person name="Gibbs R.A."/>
            <person name="Weinstock G.M."/>
            <person name="Metzker M.L."/>
            <person name="Muzny D.M."/>
            <person name="Sodergren E.J."/>
            <person name="Scherer S."/>
            <person name="Scott G."/>
            <person name="Steffen D."/>
            <person name="Worley K.C."/>
            <person name="Burch P.E."/>
            <person name="Okwuonu G."/>
            <person name="Hines S."/>
            <person name="Lewis L."/>
            <person name="Deramo C."/>
            <person name="Delgado O."/>
            <person name="Dugan-Rocha S."/>
            <person name="Miner G."/>
            <person name="Morgan M."/>
            <person name="Hawes A."/>
            <person name="Gill R."/>
            <person name="Holt R.A."/>
            <person name="Adams M.D."/>
            <person name="Amanatides P.G."/>
            <person name="Baden-Tillson H."/>
            <person name="Barnstead M."/>
            <person name="Chin S."/>
            <person name="Evans C.A."/>
            <person name="Ferriera S."/>
            <person name="Fosler C."/>
            <person name="Glodek A."/>
            <person name="Gu Z."/>
            <person name="Jennings D."/>
            <person name="Kraft C.L."/>
            <person name="Nguyen T."/>
            <person name="Pfannkoch C.M."/>
            <person name="Sitter C."/>
            <person name="Sutton G.G."/>
            <person name="Venter J.C."/>
            <person name="Woodage T."/>
            <person name="Smith D."/>
            <person name="Lee H.-M."/>
            <person name="Gustafson E."/>
            <person name="Cahill P."/>
            <person name="Kana A."/>
            <person name="Doucette-Stamm L."/>
            <person name="Weinstock K."/>
            <person name="Fechtel K."/>
            <person name="Weiss R.B."/>
            <person name="Dunn D.M."/>
            <person name="Green E.D."/>
            <person name="Blakesley R.W."/>
            <person name="Bouffard G.G."/>
            <person name="De Jong P.J."/>
            <person name="Osoegawa K."/>
            <person name="Zhu B."/>
            <person name="Marra M."/>
            <person name="Schein J."/>
            <person name="Bosdet I."/>
            <person name="Fjell C."/>
            <person name="Jones S."/>
            <person name="Krzywinski M."/>
            <person name="Mathewson C."/>
            <person name="Siddiqui A."/>
            <person name="Wye N."/>
            <person name="McPherson J."/>
            <person name="Zhao S."/>
            <person name="Fraser C.M."/>
            <person name="Shetty J."/>
            <person name="Shatsman S."/>
            <person name="Geer K."/>
            <person name="Chen Y."/>
            <person name="Abramzon S."/>
            <person name="Nierman W.C."/>
            <person name="Havlak P.H."/>
            <person name="Chen R."/>
            <person name="Durbin K.J."/>
            <person name="Egan A."/>
            <person name="Ren Y."/>
            <person name="Song X.-Z."/>
            <person name="Li B."/>
            <person name="Liu Y."/>
            <person name="Qin X."/>
            <person name="Cawley S."/>
            <person name="Cooney A.J."/>
            <person name="D'Souza L.M."/>
            <person name="Martin K."/>
            <person name="Wu J.Q."/>
            <person name="Gonzalez-Garay M.L."/>
            <person name="Jackson A.R."/>
            <person name="Kalafus K.J."/>
            <person name="McLeod M.P."/>
            <person name="Milosavljevic A."/>
            <person name="Virk D."/>
            <person name="Volkov A."/>
            <person name="Wheeler D.A."/>
            <person name="Zhang Z."/>
            <person name="Bailey J.A."/>
            <person name="Eichler E.E."/>
            <person name="Tuzun E."/>
            <person name="Birney E."/>
            <person name="Mongin E."/>
            <person name="Ureta-Vidal A."/>
            <person name="Woodwark C."/>
            <person name="Zdobnov E."/>
            <person name="Bork P."/>
            <person name="Suyama M."/>
            <person name="Torrents D."/>
            <person name="Alexandersson M."/>
            <person name="Trask B.J."/>
            <person name="Young J.M."/>
            <person name="Huang H."/>
            <person name="Wang H."/>
            <person name="Xing H."/>
            <person name="Daniels S."/>
            <person name="Gietzen D."/>
            <person name="Schmidt J."/>
            <person name="Stevens K."/>
            <person name="Vitt U."/>
            <person name="Wingrove J."/>
            <person name="Camara F."/>
            <person name="Mar Alba M."/>
            <person name="Abril J.F."/>
            <person name="Guigo R."/>
            <person name="Smit A."/>
            <person name="Dubchak I."/>
            <person name="Rubin E.M."/>
            <person name="Couronne O."/>
            <person name="Poliakov A."/>
            <person name="Huebner N."/>
            <person name="Ganten D."/>
            <person name="Goesele C."/>
            <person name="Hummel O."/>
            <person name="Kreitler T."/>
            <person name="Lee Y.-A."/>
            <person name="Monti J."/>
            <person name="Schulz H."/>
            <person name="Zimdahl H."/>
            <person name="Himmelbauer H."/>
            <person name="Lehrach H."/>
            <person name="Jacob H.J."/>
            <person name="Bromberg S."/>
            <person name="Gullings-Handley J."/>
            <person name="Jensen-Seaman M.I."/>
            <person name="Kwitek A.E."/>
            <person name="Lazar J."/>
            <person name="Pasko D."/>
            <person name="Tonellato P.J."/>
            <person name="Twigger S."/>
            <person name="Ponting C.P."/>
            <person name="Duarte J.M."/>
            <person name="Rice S."/>
            <person name="Goodstadt L."/>
            <person name="Beatson S.A."/>
            <person name="Emes R.D."/>
            <person name="Winter E.E."/>
            <person name="Webber C."/>
            <person name="Brandt P."/>
            <person name="Nyakatura G."/>
            <person name="Adetobi M."/>
            <person name="Chiaromonte F."/>
            <person name="Elnitski L."/>
            <person name="Eswara P."/>
            <person name="Hardison R.C."/>
            <person name="Hou M."/>
            <person name="Kolbe D."/>
            <person name="Makova K."/>
            <person name="Miller W."/>
            <person name="Nekrutenko A."/>
            <person name="Riemer C."/>
            <person name="Schwartz S."/>
            <person name="Taylor J."/>
            <person name="Yang S."/>
            <person name="Zhang Y."/>
            <person name="Lindpaintner K."/>
            <person name="Andrews T.D."/>
            <person name="Caccamo M."/>
            <person name="Clamp M."/>
            <person name="Clarke L."/>
            <person name="Curwen V."/>
            <person name="Durbin R.M."/>
            <person name="Eyras E."/>
            <person name="Searle S.M."/>
            <person name="Cooper G.M."/>
            <person name="Batzoglou S."/>
            <person name="Brudno M."/>
            <person name="Sidow A."/>
            <person name="Stone E.A."/>
            <person name="Payseur B.A."/>
            <person name="Bourque G."/>
            <person name="Lopez-Otin C."/>
            <person name="Puente X.S."/>
            <person name="Chakrabarti K."/>
            <person name="Chatterji S."/>
            <person name="Dewey C."/>
            <person name="Pachter L."/>
            <person name="Bray N."/>
            <person name="Yap V.B."/>
            <person name="Caspi A."/>
            <person name="Tesler G."/>
            <person name="Pevzner P.A."/>
            <person name="Haussler D."/>
            <person name="Roskin K.M."/>
            <person name="Baertsch R."/>
            <person name="Clawson H."/>
            <person name="Furey T.S."/>
            <person name="Hinrichs A.S."/>
            <person name="Karolchik D."/>
            <person name="Kent W.J."/>
            <person name="Rosenbloom K.R."/>
            <person name="Trumbower H."/>
            <person name="Weirauch M."/>
            <person name="Cooper D.N."/>
            <person name="Stenson P.D."/>
            <person name="Ma B."/>
            <person name="Brent M."/>
            <person name="Arumugam M."/>
            <person name="Shteynberg D."/>
            <person name="Copley R.R."/>
            <person name="Taylor M.S."/>
            <person name="Riethman H."/>
            <person name="Mudunuri U."/>
            <person name="Peterson J."/>
            <person name="Guyer M."/>
            <person name="Felsenfeld A."/>
            <person name="Old S."/>
            <person name="Mockrin S."/>
            <person name="Collins F.S."/>
        </authorList>
    </citation>
    <scope>NUCLEOTIDE SEQUENCE [LARGE SCALE GENOMIC DNA]</scope>
    <source>
        <strain>Brown Norway</strain>
    </source>
</reference>
<reference key="2">
    <citation type="journal article" date="2015" name="PLoS Genet.">
        <title>NINL and DZANK1 Co-function in Vesicle Transport and Are Essential for Photoreceptor Development in Zebrafish.</title>
        <authorList>
            <person name="Dona M."/>
            <person name="Bachmann-Gagescu R."/>
            <person name="Texier Y."/>
            <person name="Toedt G."/>
            <person name="Hetterschijt L."/>
            <person name="Tonnaer E.L."/>
            <person name="Peters T.A."/>
            <person name="van Beersum S.E."/>
            <person name="Bergboer J.G."/>
            <person name="Horn N."/>
            <person name="de Vrieze E."/>
            <person name="Slijkerman R.W."/>
            <person name="van Reeuwijk J."/>
            <person name="Flik G."/>
            <person name="Keunen J.E."/>
            <person name="Ueffing M."/>
            <person name="Gibson T.J."/>
            <person name="Roepman R."/>
            <person name="Boldt K."/>
            <person name="Kremer H."/>
            <person name="van Wijk E."/>
        </authorList>
    </citation>
    <scope>SUBCELLULAR LOCATION</scope>
    <scope>TISSUE SPECIFICITY</scope>
</reference>
<protein>
    <recommendedName>
        <fullName>Double zinc ribbon and ankyrin repeat-containing protein 1</fullName>
    </recommendedName>
</protein>
<gene>
    <name evidence="5" type="primary">Dzank1</name>
    <name evidence="5" type="synonym">RGD1311344</name>
</gene>
<name>DZAN1_RAT</name>
<dbReference type="EMBL" id="AABR07054068">
    <property type="status" value="NOT_ANNOTATED_CDS"/>
    <property type="molecule type" value="Genomic_DNA"/>
</dbReference>
<dbReference type="EMBL" id="AABR07054069">
    <property type="status" value="NOT_ANNOTATED_CDS"/>
    <property type="molecule type" value="Genomic_DNA"/>
</dbReference>
<dbReference type="RefSeq" id="NP_001414651.1">
    <molecule id="D4A039-1"/>
    <property type="nucleotide sequence ID" value="NM_001427722.1"/>
</dbReference>
<dbReference type="RefSeq" id="XP_003753848.2">
    <property type="nucleotide sequence ID" value="XM_003753800.4"/>
</dbReference>
<dbReference type="SMR" id="D4A039"/>
<dbReference type="FunCoup" id="D4A039">
    <property type="interactions" value="1345"/>
</dbReference>
<dbReference type="STRING" id="10116.ENSRNOP00000028999"/>
<dbReference type="GlyGen" id="D4A039">
    <property type="glycosylation" value="1 site"/>
</dbReference>
<dbReference type="PhosphoSitePlus" id="D4A039"/>
<dbReference type="PaxDb" id="10116-ENSRNOP00000028999"/>
<dbReference type="Ensembl" id="ENSRNOT00000029701.8">
    <molecule id="D4A039-1"/>
    <property type="protein sequence ID" value="ENSRNOP00000028999.6"/>
    <property type="gene ID" value="ENSRNOG00000007440.9"/>
</dbReference>
<dbReference type="Ensembl" id="ENSRNOT00000109558.1">
    <molecule id="D4A039-2"/>
    <property type="protein sequence ID" value="ENSRNOP00000077938.1"/>
    <property type="gene ID" value="ENSRNOG00000007440.9"/>
</dbReference>
<dbReference type="GeneID" id="311486"/>
<dbReference type="AGR" id="RGD:1311344"/>
<dbReference type="RGD" id="1311344">
    <property type="gene designation" value="Dzank1"/>
</dbReference>
<dbReference type="GeneTree" id="ENSGT00390000000549"/>
<dbReference type="HOGENOM" id="CLU_024089_0_0_1"/>
<dbReference type="InParanoid" id="D4A039"/>
<dbReference type="OMA" id="GFAHIRS"/>
<dbReference type="PRO" id="PR:D4A039"/>
<dbReference type="Proteomes" id="UP000002494">
    <property type="component" value="Chromosome 3"/>
</dbReference>
<dbReference type="Bgee" id="ENSRNOG00000007440">
    <property type="expression patterns" value="Expressed in brain and 18 other cell types or tissues"/>
</dbReference>
<dbReference type="GO" id="GO:0005813">
    <property type="term" value="C:centrosome"/>
    <property type="evidence" value="ECO:0000314"/>
    <property type="project" value="UniProtKB"/>
</dbReference>
<dbReference type="GO" id="GO:0005929">
    <property type="term" value="C:cilium"/>
    <property type="evidence" value="ECO:0007669"/>
    <property type="project" value="UniProtKB-SubCell"/>
</dbReference>
<dbReference type="GO" id="GO:0008270">
    <property type="term" value="F:zinc ion binding"/>
    <property type="evidence" value="ECO:0007669"/>
    <property type="project" value="UniProtKB-KW"/>
</dbReference>
<dbReference type="GO" id="GO:0042462">
    <property type="term" value="P:eye photoreceptor cell development"/>
    <property type="evidence" value="ECO:0000250"/>
    <property type="project" value="UniProtKB"/>
</dbReference>
<dbReference type="Gene3D" id="1.25.40.20">
    <property type="entry name" value="Ankyrin repeat-containing domain"/>
    <property type="match status" value="1"/>
</dbReference>
<dbReference type="InterPro" id="IPR002110">
    <property type="entry name" value="Ankyrin_rpt"/>
</dbReference>
<dbReference type="InterPro" id="IPR036770">
    <property type="entry name" value="Ankyrin_rpt-contain_sf"/>
</dbReference>
<dbReference type="InterPro" id="IPR052481">
    <property type="entry name" value="DZAN1"/>
</dbReference>
<dbReference type="InterPro" id="IPR025874">
    <property type="entry name" value="DZR"/>
</dbReference>
<dbReference type="InterPro" id="IPR026876">
    <property type="entry name" value="Fn3_assoc_repeat"/>
</dbReference>
<dbReference type="PANTHER" id="PTHR16058">
    <property type="entry name" value="DOUBLE ZINC RIBBON AND ANKYRIN REPEAT-CONTAINING PROTEIN 1"/>
    <property type="match status" value="1"/>
</dbReference>
<dbReference type="PANTHER" id="PTHR16058:SF4">
    <property type="entry name" value="DOUBLE ZINC RIBBON AND ANKYRIN REPEAT-CONTAINING PROTEIN 1"/>
    <property type="match status" value="1"/>
</dbReference>
<dbReference type="Pfam" id="PF12796">
    <property type="entry name" value="Ank_2"/>
    <property type="match status" value="1"/>
</dbReference>
<dbReference type="Pfam" id="PF12773">
    <property type="entry name" value="DZR"/>
    <property type="match status" value="2"/>
</dbReference>
<dbReference type="Pfam" id="PF13287">
    <property type="entry name" value="Fn3_assoc"/>
    <property type="match status" value="1"/>
</dbReference>
<dbReference type="SUPFAM" id="SSF48403">
    <property type="entry name" value="Ankyrin repeat"/>
    <property type="match status" value="1"/>
</dbReference>
<accession>D4A039</accession>
<accession>A0A8I5Y1R7</accession>
<evidence type="ECO:0000250" key="1">
    <source>
        <dbReference type="UniProtKB" id="Q1LXR6"/>
    </source>
</evidence>
<evidence type="ECO:0000250" key="2">
    <source>
        <dbReference type="UniProtKB" id="Q9NVP4"/>
    </source>
</evidence>
<evidence type="ECO:0000255" key="3"/>
<evidence type="ECO:0000269" key="4">
    <source>
    </source>
</evidence>
<evidence type="ECO:0000312" key="5">
    <source>
        <dbReference type="RGD" id="1311344"/>
    </source>
</evidence>
<feature type="chain" id="PRO_0000459054" description="Double zinc ribbon and ankyrin repeat-containing protein 1">
    <location>
        <begin position="1"/>
        <end position="757"/>
    </location>
</feature>
<feature type="repeat" description="ANK 1" evidence="3">
    <location>
        <begin position="631"/>
        <end position="662"/>
    </location>
</feature>
<feature type="repeat" description="ANK 2" evidence="3">
    <location>
        <begin position="666"/>
        <end position="695"/>
    </location>
</feature>
<feature type="zinc finger region" description="DZANK-type 1" evidence="3">
    <location>
        <begin position="230"/>
        <end position="290"/>
    </location>
</feature>
<feature type="zinc finger region" description="DZANK-type 2" evidence="3">
    <location>
        <begin position="359"/>
        <end position="407"/>
    </location>
</feature>
<feature type="splice variant" id="VSP_062032" description="In isoform 2.">
    <location>
        <begin position="630"/>
        <end position="656"/>
    </location>
</feature>
<organism>
    <name type="scientific">Rattus norvegicus</name>
    <name type="common">Rat</name>
    <dbReference type="NCBI Taxonomy" id="10116"/>
    <lineage>
        <taxon>Eukaryota</taxon>
        <taxon>Metazoa</taxon>
        <taxon>Chordata</taxon>
        <taxon>Craniata</taxon>
        <taxon>Vertebrata</taxon>
        <taxon>Euteleostomi</taxon>
        <taxon>Mammalia</taxon>
        <taxon>Eutheria</taxon>
        <taxon>Euarchontoglires</taxon>
        <taxon>Glires</taxon>
        <taxon>Rodentia</taxon>
        <taxon>Myomorpha</taxon>
        <taxon>Muroidea</taxon>
        <taxon>Muridae</taxon>
        <taxon>Murinae</taxon>
        <taxon>Rattus</taxon>
    </lineage>
</organism>
<proteinExistence type="evidence at transcript level"/>
<sequence length="757" mass="82722">MTAGSVCAPQIIPLRVPQPGKANHEIDTNTLLEMKSDTPDVNIYYTLDGSKPDFLKKVGSGENNTFKYIKPIALPDGKIQVKAVAVSKDCRQSGIVTKVFQVDYEPPKMVSSEDHGEDALKGFSKQELKNGFVGPKLRKKYKNAENKSTWNVNLRRLADLKVGERADPKTLKDLRFSESPLEIPAYHEGASARLPTHQAQSPGFAHITGQKSLTSTEVMRIQRETDFLKCAHCLASRPSDPFARFCQECGAPVPPIFGYRLPPPEGAQMGLCAECGSMVPMNTPICVVCEAPLAPQLRPQASLYLKERVICRTCGTGNPAHLRYCVTCEGTLPPTQEQWLCNGDEVPRLPTRNGETISCSRCGCQNLWEASFCDWCGAMLGISASHSVCPKCGASNHLTARFCGSCGIYVKSITRFRMNNSLAIVAGGPRPFPEPRSAWQSLNVPLPTPATGSKKDMGTQTSGLFYPSGKLLAKKELEAASHRQRQEKMSDHRPVLTAVSPGRGYWRKQLDHISAHLRSYAQNNPEFRALIAEPRMGKLISATVHEDGYEVSIRLNYIQVSNKNLYLNKSMNLSDHFLSSVTEGGNGLYGSRSSLVSAYSQSISDTPESIKKMKNPKAKSFLANPEPLTPENRLLLEEVGSTGKGRLSVLEQLLDEGADPNCCDSQGRPAVIVAVVNKHFEAIPVLAQRGADIDQQWGPFGNTALHEATLLGLEGRESVATLLGCNANTQKKNTRGQTAYDIALEMGDDLTSALFAD</sequence>
<comment type="function">
    <text evidence="1">Involved in vesicle transport in photoreceptor cells.</text>
</comment>
<comment type="subunit">
    <text evidence="2">Interacts with NINL. Associates with DYNC1H1 and multiple dynein intermediate and light chains as well as actin-binding proteins.</text>
</comment>
<comment type="subcellular location">
    <subcellularLocation>
        <location evidence="4">Cell projection</location>
        <location evidence="4">Cilium</location>
    </subcellularLocation>
    <text evidence="4">Colocalizes with NINL in the inner segment (IS) and in the region of the connecting cilium.</text>
</comment>
<comment type="alternative products">
    <event type="alternative splicing"/>
    <isoform>
        <id>D4A039-1</id>
        <name>1</name>
        <sequence type="displayed"/>
    </isoform>
    <isoform>
        <id>D4A039-2</id>
        <name>2</name>
        <sequence type="described" ref="VSP_062032"/>
    </isoform>
</comment>
<comment type="tissue specificity">
    <text evidence="4">Expressed in retina.</text>
</comment>